<reference key="1">
    <citation type="submission" date="2007-05" db="EMBL/GenBank/DDBJ databases">
        <title>Complete sequence of Geobacter uraniireducens Rf4.</title>
        <authorList>
            <consortium name="US DOE Joint Genome Institute"/>
            <person name="Copeland A."/>
            <person name="Lucas S."/>
            <person name="Lapidus A."/>
            <person name="Barry K."/>
            <person name="Detter J.C."/>
            <person name="Glavina del Rio T."/>
            <person name="Hammon N."/>
            <person name="Israni S."/>
            <person name="Dalin E."/>
            <person name="Tice H."/>
            <person name="Pitluck S."/>
            <person name="Chertkov O."/>
            <person name="Brettin T."/>
            <person name="Bruce D."/>
            <person name="Han C."/>
            <person name="Schmutz J."/>
            <person name="Larimer F."/>
            <person name="Land M."/>
            <person name="Hauser L."/>
            <person name="Kyrpides N."/>
            <person name="Mikhailova N."/>
            <person name="Shelobolina E."/>
            <person name="Aklujkar M."/>
            <person name="Lovley D."/>
            <person name="Richardson P."/>
        </authorList>
    </citation>
    <scope>NUCLEOTIDE SEQUENCE [LARGE SCALE GENOMIC DNA]</scope>
    <source>
        <strain>ATCC BAA-1134 / JCM 13001 / Rf4</strain>
    </source>
</reference>
<evidence type="ECO:0000255" key="1">
    <source>
        <dbReference type="HAMAP-Rule" id="MF_01600"/>
    </source>
</evidence>
<gene>
    <name type="ordered locus">Gura_0902</name>
</gene>
<proteinExistence type="inferred from homology"/>
<name>Y902_GEOUR</name>
<sequence>MVKNKFIIILVVVAVILPFISSLINFYTDWLFFVETGFTSVFTTTLAAKVGAGLFFGVLLFIFAMINLHFSNRAKFPQTNIFVEGRNIYQVKRDEAARLAKPLGILASAILAILACKWGAMQWQNVLLFTNMVTVGTNDPILGKDIGFYLFSLPLLEMLKIFAGFTVLATTVLVGAVYYVRGGITLMERGAAIDVKVRKHLAVLIGIFSLTVAAGFYLNGCGLLLSGSSTFHGAGYADVNARLLTLRILTVLTPLAGAILAAGLWQGAWRLALLPPILVIAVYGIGIKAYPALLEKFKVAPNQLALETPYIENTIRFTRLGYDLDKIETIPFDADVKLTAADIANNDATIKNIRLWDHAPLLKTYSQLQQIRTYYKFFDVDNDRYLVNGQYTQVMLSPRELSYDDLPSRNWINERLIFTHGNGITFGPVSRISKEGLPEFFVKDIPAVSLADIKVTRPEIYYGELSNEYVIVKTKVPEFSYPTATGNINTTYGGKGGVPVGSMLNKALFAARFRTEKILLSSDIGSESRILYYRNINERVRAVAPFLRFDGDPYMVVADNGGLKWIIDAYTYSSRLPYSKPLKGGINYMRNSVKAVVDAYDGSLTFYISDPDDVMVKVYGRIFPELFKPMAAMPDDLRKHIRYPHQFLQLQAAMFAAYHMTDPKVFYNKENLWEIPSLGDKPMEPYYTIMKLPGEKKEEYLLLLPFTPSKRDNLAAWLTARCDAPNYGKILAYTFPRDRLIYGPKQIDARINQDSFISQQLTLWNQRGSEVIRGSMLVIPIEKSLLYVQPLFLAAADKAGLPELRRVIVAYGDEVVMEETLELALQRIFGGRKAPAGSTQPTPAAMKASSAELAREAMSIFERATNLQRQGDWAGYGEELKKLQQVLRRMAQ</sequence>
<accession>A5GBD1</accession>
<comment type="subcellular location">
    <subcellularLocation>
        <location evidence="1">Cell membrane</location>
        <topology evidence="1">Multi-pass membrane protein</topology>
    </subcellularLocation>
</comment>
<comment type="similarity">
    <text evidence="1">Belongs to the UPF0182 family.</text>
</comment>
<dbReference type="EMBL" id="CP000698">
    <property type="protein sequence ID" value="ABQ25108.1"/>
    <property type="molecule type" value="Genomic_DNA"/>
</dbReference>
<dbReference type="RefSeq" id="WP_011937832.1">
    <property type="nucleotide sequence ID" value="NC_009483.1"/>
</dbReference>
<dbReference type="SMR" id="A5GBD1"/>
<dbReference type="STRING" id="351605.Gura_0902"/>
<dbReference type="KEGG" id="gur:Gura_0902"/>
<dbReference type="HOGENOM" id="CLU_007733_0_0_7"/>
<dbReference type="OrthoDB" id="9763654at2"/>
<dbReference type="Proteomes" id="UP000006695">
    <property type="component" value="Chromosome"/>
</dbReference>
<dbReference type="GO" id="GO:0005576">
    <property type="term" value="C:extracellular region"/>
    <property type="evidence" value="ECO:0007669"/>
    <property type="project" value="TreeGrafter"/>
</dbReference>
<dbReference type="GO" id="GO:0005886">
    <property type="term" value="C:plasma membrane"/>
    <property type="evidence" value="ECO:0007669"/>
    <property type="project" value="UniProtKB-SubCell"/>
</dbReference>
<dbReference type="HAMAP" id="MF_01600">
    <property type="entry name" value="UPF0182"/>
    <property type="match status" value="1"/>
</dbReference>
<dbReference type="InterPro" id="IPR005372">
    <property type="entry name" value="UPF0182"/>
</dbReference>
<dbReference type="PANTHER" id="PTHR39344">
    <property type="entry name" value="UPF0182 PROTEIN SLL1060"/>
    <property type="match status" value="1"/>
</dbReference>
<dbReference type="PANTHER" id="PTHR39344:SF1">
    <property type="entry name" value="UPF0182 PROTEIN SLL1060"/>
    <property type="match status" value="1"/>
</dbReference>
<dbReference type="Pfam" id="PF03699">
    <property type="entry name" value="UPF0182"/>
    <property type="match status" value="1"/>
</dbReference>
<organism>
    <name type="scientific">Geotalea uraniireducens (strain Rf4)</name>
    <name type="common">Geobacter uraniireducens</name>
    <dbReference type="NCBI Taxonomy" id="351605"/>
    <lineage>
        <taxon>Bacteria</taxon>
        <taxon>Pseudomonadati</taxon>
        <taxon>Thermodesulfobacteriota</taxon>
        <taxon>Desulfuromonadia</taxon>
        <taxon>Geobacterales</taxon>
        <taxon>Geobacteraceae</taxon>
        <taxon>Geotalea</taxon>
    </lineage>
</organism>
<feature type="chain" id="PRO_0000335546" description="UPF0182 protein Gura_0902">
    <location>
        <begin position="1"/>
        <end position="892"/>
    </location>
</feature>
<feature type="transmembrane region" description="Helical" evidence="1">
    <location>
        <begin position="6"/>
        <end position="26"/>
    </location>
</feature>
<feature type="transmembrane region" description="Helical" evidence="1">
    <location>
        <begin position="50"/>
        <end position="70"/>
    </location>
</feature>
<feature type="transmembrane region" description="Helical" evidence="1">
    <location>
        <begin position="103"/>
        <end position="123"/>
    </location>
</feature>
<feature type="transmembrane region" description="Helical" evidence="1">
    <location>
        <begin position="158"/>
        <end position="178"/>
    </location>
</feature>
<feature type="transmembrane region" description="Helical" evidence="1">
    <location>
        <begin position="201"/>
        <end position="221"/>
    </location>
</feature>
<feature type="transmembrane region" description="Helical" evidence="1">
    <location>
        <begin position="248"/>
        <end position="268"/>
    </location>
</feature>
<feature type="transmembrane region" description="Helical" evidence="1">
    <location>
        <begin position="271"/>
        <end position="291"/>
    </location>
</feature>
<keyword id="KW-1003">Cell membrane</keyword>
<keyword id="KW-0472">Membrane</keyword>
<keyword id="KW-1185">Reference proteome</keyword>
<keyword id="KW-0812">Transmembrane</keyword>
<keyword id="KW-1133">Transmembrane helix</keyword>
<protein>
    <recommendedName>
        <fullName evidence="1">UPF0182 protein Gura_0902</fullName>
    </recommendedName>
</protein>